<accession>Q9L4S2</accession>
<feature type="chain" id="PRO_0000279382" description="Catalase-like protein">
    <location>
        <begin position="1"/>
        <end position="455"/>
    </location>
</feature>
<feature type="region of interest" description="Disordered" evidence="1">
    <location>
        <begin position="1"/>
        <end position="25"/>
    </location>
</feature>
<organism>
    <name type="scientific">Staphylococcus aureus</name>
    <dbReference type="NCBI Taxonomy" id="1280"/>
    <lineage>
        <taxon>Bacteria</taxon>
        <taxon>Bacillati</taxon>
        <taxon>Bacillota</taxon>
        <taxon>Bacilli</taxon>
        <taxon>Bacillales</taxon>
        <taxon>Staphylococcaceae</taxon>
        <taxon>Staphylococcus</taxon>
    </lineage>
</organism>
<reference key="1">
    <citation type="journal article" date="2000" name="Microbiology">
        <title>Catalase deficiency in Staphylococcus aureus subsp. anaerobius is associated with natural loss-of-function mutations within the structural gene.</title>
        <authorList>
            <person name="Sanz R."/>
            <person name="Marin I."/>
            <person name="Ruiz-Santa-Quiteria J.A."/>
            <person name="Orden J.A."/>
            <person name="Cid D."/>
            <person name="Diez R.M."/>
            <person name="Silhadi K.S."/>
            <person name="Amils R."/>
            <person name="de la Fuente R."/>
        </authorList>
    </citation>
    <scope>NUCLEOTIDE SEQUENCE [GENOMIC DNA]</scope>
    <scope>LACK OF CATALASE ACTIVITY</scope>
    <source>
        <strain>Subsp. anaerobius / MVF 213</strain>
    </source>
</reference>
<proteinExistence type="inferred from homology"/>
<evidence type="ECO:0000256" key="1">
    <source>
        <dbReference type="SAM" id="MobiDB-lite"/>
    </source>
</evidence>
<evidence type="ECO:0000305" key="2"/>
<gene>
    <name type="primary">katB</name>
</gene>
<comment type="function">
    <text>Catalytically inactive.</text>
</comment>
<comment type="similarity">
    <text evidence="2">Belongs to the catalase family.</text>
</comment>
<comment type="caution">
    <text evidence="2">Although a transcript has been detected, this protein has no catalase activity. Comparison with orthologs shows that the last 50 C-terminal amino acids, which seem to be essential for activity, are missing due to a natural frameshift in position 446. The sequence also contains six missense mutations, including the replacement of Pro-317 with Ser, which could modify the structure of the protein. Both alterations seem to contribute to the lack of catalase activity.</text>
</comment>
<name>CATB_STAAU</name>
<sequence length="455" mass="52618">MSQQDKKLTGVFGHPVSDRENSMTAGPRGPLLMQDIYFLEQMSQFDREVIPERRMHAKGSGAFGTFTVTKDITKYTNAKIFSEIGKQTEMFARFSTVAGERGAADAESDIRGFALKFYTEEGNWDLVGNNTPVFFFRDPKLFVSLNRAVKRDPRTNMRDAQNNWDFWTGLPEALHQVTILMSDRGIPKDLRHMHGFGSHTYSMYNDSGERVWVKLHFRTQQGIENLTDEEAAEIIATGRDSSQRDLFEAIEKGDYPKWTMYIQVMTEEQAKNHKDNPFDLTKVWYHDEYPLIEVGEFELNRNPDNYFMDVEQVAFASTNIIPGLDFSPDKMLQGRLFSYGDAQRYRLGVNHWQIPVNQPKGVGIENICPFSRDGQMRVVDNNQGGGTHYYPNNHGKFDSQPEYKKPPFPTDGYGYEYNQRQDDDNYFEQPGKLFRLQSEGAKERILQIQQMQWKA</sequence>
<dbReference type="EMBL" id="AJ000471">
    <property type="protein sequence ID" value="CAB76840.1"/>
    <property type="molecule type" value="Genomic_DNA"/>
</dbReference>
<dbReference type="SMR" id="Q9L4S2"/>
<dbReference type="GO" id="GO:0005737">
    <property type="term" value="C:cytoplasm"/>
    <property type="evidence" value="ECO:0007669"/>
    <property type="project" value="TreeGrafter"/>
</dbReference>
<dbReference type="GO" id="GO:0004096">
    <property type="term" value="F:catalase activity"/>
    <property type="evidence" value="ECO:0007669"/>
    <property type="project" value="InterPro"/>
</dbReference>
<dbReference type="GO" id="GO:0020037">
    <property type="term" value="F:heme binding"/>
    <property type="evidence" value="ECO:0007669"/>
    <property type="project" value="InterPro"/>
</dbReference>
<dbReference type="GO" id="GO:0042744">
    <property type="term" value="P:hydrogen peroxide catabolic process"/>
    <property type="evidence" value="ECO:0007669"/>
    <property type="project" value="InterPro"/>
</dbReference>
<dbReference type="GO" id="GO:0042542">
    <property type="term" value="P:response to hydrogen peroxide"/>
    <property type="evidence" value="ECO:0007669"/>
    <property type="project" value="TreeGrafter"/>
</dbReference>
<dbReference type="CDD" id="cd08156">
    <property type="entry name" value="catalase_clade_3"/>
    <property type="match status" value="1"/>
</dbReference>
<dbReference type="FunFam" id="2.40.180.10:FF:000001">
    <property type="entry name" value="Catalase"/>
    <property type="match status" value="1"/>
</dbReference>
<dbReference type="Gene3D" id="2.40.180.10">
    <property type="entry name" value="Catalase core domain"/>
    <property type="match status" value="1"/>
</dbReference>
<dbReference type="InterPro" id="IPR018028">
    <property type="entry name" value="Catalase"/>
</dbReference>
<dbReference type="InterPro" id="IPR040333">
    <property type="entry name" value="Catalase_3"/>
</dbReference>
<dbReference type="InterPro" id="IPR024708">
    <property type="entry name" value="Catalase_AS"/>
</dbReference>
<dbReference type="InterPro" id="IPR024711">
    <property type="entry name" value="Catalase_clade1/3"/>
</dbReference>
<dbReference type="InterPro" id="IPR011614">
    <property type="entry name" value="Catalase_core"/>
</dbReference>
<dbReference type="InterPro" id="IPR002226">
    <property type="entry name" value="Catalase_haem_BS"/>
</dbReference>
<dbReference type="InterPro" id="IPR020835">
    <property type="entry name" value="Catalase_sf"/>
</dbReference>
<dbReference type="PANTHER" id="PTHR11465">
    <property type="entry name" value="CATALASE"/>
    <property type="match status" value="1"/>
</dbReference>
<dbReference type="PANTHER" id="PTHR11465:SF61">
    <property type="entry name" value="CATALASE"/>
    <property type="match status" value="1"/>
</dbReference>
<dbReference type="Pfam" id="PF00199">
    <property type="entry name" value="Catalase"/>
    <property type="match status" value="1"/>
</dbReference>
<dbReference type="PIRSF" id="PIRSF038928">
    <property type="entry name" value="Catalase_clade1-3"/>
    <property type="match status" value="1"/>
</dbReference>
<dbReference type="PRINTS" id="PR00067">
    <property type="entry name" value="CATALASE"/>
</dbReference>
<dbReference type="SMART" id="SM01060">
    <property type="entry name" value="Catalase"/>
    <property type="match status" value="1"/>
</dbReference>
<dbReference type="SUPFAM" id="SSF56634">
    <property type="entry name" value="Heme-dependent catalase-like"/>
    <property type="match status" value="1"/>
</dbReference>
<dbReference type="PROSITE" id="PS00437">
    <property type="entry name" value="CATALASE_1"/>
    <property type="match status" value="1"/>
</dbReference>
<dbReference type="PROSITE" id="PS00438">
    <property type="entry name" value="CATALASE_2"/>
    <property type="match status" value="1"/>
</dbReference>
<dbReference type="PROSITE" id="PS51402">
    <property type="entry name" value="CATALASE_3"/>
    <property type="match status" value="1"/>
</dbReference>
<protein>
    <recommendedName>
        <fullName>Catalase-like protein</fullName>
    </recommendedName>
</protein>